<gene>
    <name evidence="1" type="primary">rpsN</name>
    <name type="ordered locus">ECS88_3694</name>
</gene>
<keyword id="KW-1185">Reference proteome</keyword>
<keyword id="KW-0687">Ribonucleoprotein</keyword>
<keyword id="KW-0689">Ribosomal protein</keyword>
<keyword id="KW-0694">RNA-binding</keyword>
<keyword id="KW-0699">rRNA-binding</keyword>
<evidence type="ECO:0000255" key="1">
    <source>
        <dbReference type="HAMAP-Rule" id="MF_00537"/>
    </source>
</evidence>
<evidence type="ECO:0000305" key="2"/>
<organism>
    <name type="scientific">Escherichia coli O45:K1 (strain S88 / ExPEC)</name>
    <dbReference type="NCBI Taxonomy" id="585035"/>
    <lineage>
        <taxon>Bacteria</taxon>
        <taxon>Pseudomonadati</taxon>
        <taxon>Pseudomonadota</taxon>
        <taxon>Gammaproteobacteria</taxon>
        <taxon>Enterobacterales</taxon>
        <taxon>Enterobacteriaceae</taxon>
        <taxon>Escherichia</taxon>
    </lineage>
</organism>
<protein>
    <recommendedName>
        <fullName evidence="1">Small ribosomal subunit protein uS14</fullName>
    </recommendedName>
    <alternativeName>
        <fullName evidence="2">30S ribosomal protein S14</fullName>
    </alternativeName>
</protein>
<comment type="function">
    <text evidence="1">Binds 16S rRNA, required for the assembly of 30S particles and may also be responsible for determining the conformation of the 16S rRNA at the A site.</text>
</comment>
<comment type="subunit">
    <text evidence="1">Part of the 30S ribosomal subunit. Contacts proteins S3 and S10.</text>
</comment>
<comment type="similarity">
    <text evidence="1">Belongs to the universal ribosomal protein uS14 family.</text>
</comment>
<proteinExistence type="inferred from homology"/>
<accession>B7MCS2</accession>
<reference key="1">
    <citation type="journal article" date="2009" name="PLoS Genet.">
        <title>Organised genome dynamics in the Escherichia coli species results in highly diverse adaptive paths.</title>
        <authorList>
            <person name="Touchon M."/>
            <person name="Hoede C."/>
            <person name="Tenaillon O."/>
            <person name="Barbe V."/>
            <person name="Baeriswyl S."/>
            <person name="Bidet P."/>
            <person name="Bingen E."/>
            <person name="Bonacorsi S."/>
            <person name="Bouchier C."/>
            <person name="Bouvet O."/>
            <person name="Calteau A."/>
            <person name="Chiapello H."/>
            <person name="Clermont O."/>
            <person name="Cruveiller S."/>
            <person name="Danchin A."/>
            <person name="Diard M."/>
            <person name="Dossat C."/>
            <person name="Karoui M.E."/>
            <person name="Frapy E."/>
            <person name="Garry L."/>
            <person name="Ghigo J.M."/>
            <person name="Gilles A.M."/>
            <person name="Johnson J."/>
            <person name="Le Bouguenec C."/>
            <person name="Lescat M."/>
            <person name="Mangenot S."/>
            <person name="Martinez-Jehanne V."/>
            <person name="Matic I."/>
            <person name="Nassif X."/>
            <person name="Oztas S."/>
            <person name="Petit M.A."/>
            <person name="Pichon C."/>
            <person name="Rouy Z."/>
            <person name="Ruf C.S."/>
            <person name="Schneider D."/>
            <person name="Tourret J."/>
            <person name="Vacherie B."/>
            <person name="Vallenet D."/>
            <person name="Medigue C."/>
            <person name="Rocha E.P.C."/>
            <person name="Denamur E."/>
        </authorList>
    </citation>
    <scope>NUCLEOTIDE SEQUENCE [LARGE SCALE GENOMIC DNA]</scope>
    <source>
        <strain>S88 / ExPEC</strain>
    </source>
</reference>
<sequence>MAKQSMKAREVKRVALADKYFAKRAELKAIISDVNASDEDRWNAVLKLQTLPRDSSPSRQRNRCRQTGRPHGFLRKFGLSRIKVREAAMRGEIPGLKKASW</sequence>
<name>RS14_ECO45</name>
<dbReference type="EMBL" id="CU928161">
    <property type="protein sequence ID" value="CAR04911.1"/>
    <property type="molecule type" value="Genomic_DNA"/>
</dbReference>
<dbReference type="RefSeq" id="WP_001118930.1">
    <property type="nucleotide sequence ID" value="NC_011742.1"/>
</dbReference>
<dbReference type="EMDB" id="EMD-7014"/>
<dbReference type="EMDB" id="EMD-7015"/>
<dbReference type="EMDB" id="EMD-7016"/>
<dbReference type="EMDB" id="EMD-7970"/>
<dbReference type="EMDB" id="EMD-8621"/>
<dbReference type="EMDB" id="EMD-8826"/>
<dbReference type="EMDB" id="EMD-8829"/>
<dbReference type="SMR" id="B7MCS2"/>
<dbReference type="IntAct" id="B7MCS2">
    <property type="interactions" value="1"/>
</dbReference>
<dbReference type="GeneID" id="93778680"/>
<dbReference type="KEGG" id="ecz:ECS88_3694"/>
<dbReference type="HOGENOM" id="CLU_139869_0_1_6"/>
<dbReference type="Proteomes" id="UP000000747">
    <property type="component" value="Chromosome"/>
</dbReference>
<dbReference type="GO" id="GO:0005737">
    <property type="term" value="C:cytoplasm"/>
    <property type="evidence" value="ECO:0007669"/>
    <property type="project" value="UniProtKB-ARBA"/>
</dbReference>
<dbReference type="GO" id="GO:0015935">
    <property type="term" value="C:small ribosomal subunit"/>
    <property type="evidence" value="ECO:0007669"/>
    <property type="project" value="TreeGrafter"/>
</dbReference>
<dbReference type="GO" id="GO:0019843">
    <property type="term" value="F:rRNA binding"/>
    <property type="evidence" value="ECO:0007669"/>
    <property type="project" value="UniProtKB-UniRule"/>
</dbReference>
<dbReference type="GO" id="GO:0003735">
    <property type="term" value="F:structural constituent of ribosome"/>
    <property type="evidence" value="ECO:0007669"/>
    <property type="project" value="InterPro"/>
</dbReference>
<dbReference type="GO" id="GO:0006412">
    <property type="term" value="P:translation"/>
    <property type="evidence" value="ECO:0007669"/>
    <property type="project" value="UniProtKB-UniRule"/>
</dbReference>
<dbReference type="FunFam" id="1.10.287.1480:FF:000001">
    <property type="entry name" value="30S ribosomal protein S14"/>
    <property type="match status" value="1"/>
</dbReference>
<dbReference type="Gene3D" id="1.10.287.1480">
    <property type="match status" value="1"/>
</dbReference>
<dbReference type="HAMAP" id="MF_00537">
    <property type="entry name" value="Ribosomal_uS14_1"/>
    <property type="match status" value="1"/>
</dbReference>
<dbReference type="InterPro" id="IPR001209">
    <property type="entry name" value="Ribosomal_uS14"/>
</dbReference>
<dbReference type="InterPro" id="IPR023036">
    <property type="entry name" value="Ribosomal_uS14_bac/plastid"/>
</dbReference>
<dbReference type="InterPro" id="IPR018271">
    <property type="entry name" value="Ribosomal_uS14_CS"/>
</dbReference>
<dbReference type="NCBIfam" id="NF006477">
    <property type="entry name" value="PRK08881.1"/>
    <property type="match status" value="1"/>
</dbReference>
<dbReference type="PANTHER" id="PTHR19836">
    <property type="entry name" value="30S RIBOSOMAL PROTEIN S14"/>
    <property type="match status" value="1"/>
</dbReference>
<dbReference type="PANTHER" id="PTHR19836:SF19">
    <property type="entry name" value="SMALL RIBOSOMAL SUBUNIT PROTEIN US14M"/>
    <property type="match status" value="1"/>
</dbReference>
<dbReference type="Pfam" id="PF00253">
    <property type="entry name" value="Ribosomal_S14"/>
    <property type="match status" value="1"/>
</dbReference>
<dbReference type="SUPFAM" id="SSF57716">
    <property type="entry name" value="Glucocorticoid receptor-like (DNA-binding domain)"/>
    <property type="match status" value="1"/>
</dbReference>
<dbReference type="PROSITE" id="PS00527">
    <property type="entry name" value="RIBOSOMAL_S14"/>
    <property type="match status" value="1"/>
</dbReference>
<feature type="chain" id="PRO_1000128382" description="Small ribosomal subunit protein uS14">
    <location>
        <begin position="1"/>
        <end position="101"/>
    </location>
</feature>